<dbReference type="EMBL" id="AAFI02000177">
    <property type="protein sequence ID" value="EAL61619.1"/>
    <property type="molecule type" value="Genomic_DNA"/>
</dbReference>
<dbReference type="RefSeq" id="XP_635108.1">
    <property type="nucleotide sequence ID" value="XM_630016.1"/>
</dbReference>
<dbReference type="SMR" id="Q54EY2"/>
<dbReference type="FunCoup" id="Q54EY2">
    <property type="interactions" value="723"/>
</dbReference>
<dbReference type="STRING" id="44689.Q54EY2"/>
<dbReference type="PaxDb" id="44689-DDB0231373"/>
<dbReference type="EnsemblProtists" id="EAL61619">
    <property type="protein sequence ID" value="EAL61619"/>
    <property type="gene ID" value="DDB_G0291271"/>
</dbReference>
<dbReference type="GeneID" id="8628055"/>
<dbReference type="KEGG" id="ddi:DDB_G0291271"/>
<dbReference type="dictyBase" id="DDB_G0291271">
    <property type="gene designation" value="eif2b2"/>
</dbReference>
<dbReference type="VEuPathDB" id="AmoebaDB:DDB_G0291271"/>
<dbReference type="eggNOG" id="KOG1465">
    <property type="taxonomic scope" value="Eukaryota"/>
</dbReference>
<dbReference type="HOGENOM" id="CLU_016218_4_3_1"/>
<dbReference type="InParanoid" id="Q54EY2"/>
<dbReference type="OMA" id="SHSCAVA"/>
<dbReference type="PhylomeDB" id="Q54EY2"/>
<dbReference type="Reactome" id="R-DDI-72731">
    <property type="pathway name" value="Recycling of eIF2:GDP"/>
</dbReference>
<dbReference type="PRO" id="PR:Q54EY2"/>
<dbReference type="Proteomes" id="UP000002195">
    <property type="component" value="Chromosome 6"/>
</dbReference>
<dbReference type="GO" id="GO:0005829">
    <property type="term" value="C:cytosol"/>
    <property type="evidence" value="ECO:0007669"/>
    <property type="project" value="UniProtKB-SubCell"/>
</dbReference>
<dbReference type="GO" id="GO:0005851">
    <property type="term" value="C:eukaryotic translation initiation factor 2B complex"/>
    <property type="evidence" value="ECO:0000250"/>
    <property type="project" value="UniProtKB"/>
</dbReference>
<dbReference type="GO" id="GO:0005085">
    <property type="term" value="F:guanyl-nucleotide exchange factor activity"/>
    <property type="evidence" value="ECO:0000250"/>
    <property type="project" value="UniProtKB"/>
</dbReference>
<dbReference type="GO" id="GO:0003743">
    <property type="term" value="F:translation initiation factor activity"/>
    <property type="evidence" value="ECO:0000250"/>
    <property type="project" value="dictyBase"/>
</dbReference>
<dbReference type="GO" id="GO:0002183">
    <property type="term" value="P:cytoplasmic translational initiation"/>
    <property type="evidence" value="ECO:0000250"/>
    <property type="project" value="UniProtKB"/>
</dbReference>
<dbReference type="GO" id="GO:0006413">
    <property type="term" value="P:translational initiation"/>
    <property type="evidence" value="ECO:0000318"/>
    <property type="project" value="GO_Central"/>
</dbReference>
<dbReference type="FunFam" id="3.40.50.10470:FF:000009">
    <property type="entry name" value="Translation initiation factor eIF2B subunit"/>
    <property type="match status" value="1"/>
</dbReference>
<dbReference type="Gene3D" id="3.40.50.10470">
    <property type="entry name" value="Translation initiation factor eif-2b, domain 2"/>
    <property type="match status" value="1"/>
</dbReference>
<dbReference type="InterPro" id="IPR051855">
    <property type="entry name" value="eIF2B_beta_subunit"/>
</dbReference>
<dbReference type="InterPro" id="IPR000649">
    <property type="entry name" value="IF-2B-related"/>
</dbReference>
<dbReference type="InterPro" id="IPR042529">
    <property type="entry name" value="IF_2B-like_C"/>
</dbReference>
<dbReference type="InterPro" id="IPR037171">
    <property type="entry name" value="NagB/RpiA_transferase-like"/>
</dbReference>
<dbReference type="PANTHER" id="PTHR45859">
    <property type="entry name" value="TRANSLATION INITIATION FACTOR EIF-2B SUBUNIT BETA"/>
    <property type="match status" value="1"/>
</dbReference>
<dbReference type="PANTHER" id="PTHR45859:SF1">
    <property type="entry name" value="TRANSLATION INITIATION FACTOR EIF-2B SUBUNIT BETA"/>
    <property type="match status" value="1"/>
</dbReference>
<dbReference type="Pfam" id="PF01008">
    <property type="entry name" value="IF-2B"/>
    <property type="match status" value="1"/>
</dbReference>
<dbReference type="SUPFAM" id="SSF100950">
    <property type="entry name" value="NagB/RpiA/CoA transferase-like"/>
    <property type="match status" value="1"/>
</dbReference>
<accession>Q54EY2</accession>
<organism>
    <name type="scientific">Dictyostelium discoideum</name>
    <name type="common">Social amoeba</name>
    <dbReference type="NCBI Taxonomy" id="44689"/>
    <lineage>
        <taxon>Eukaryota</taxon>
        <taxon>Amoebozoa</taxon>
        <taxon>Evosea</taxon>
        <taxon>Eumycetozoa</taxon>
        <taxon>Dictyostelia</taxon>
        <taxon>Dictyosteliales</taxon>
        <taxon>Dictyosteliaceae</taxon>
        <taxon>Dictyostelium</taxon>
    </lineage>
</organism>
<keyword id="KW-0963">Cytoplasm</keyword>
<keyword id="KW-0396">Initiation factor</keyword>
<keyword id="KW-0648">Protein biosynthesis</keyword>
<keyword id="KW-1185">Reference proteome</keyword>
<reference key="1">
    <citation type="journal article" date="2005" name="Nature">
        <title>The genome of the social amoeba Dictyostelium discoideum.</title>
        <authorList>
            <person name="Eichinger L."/>
            <person name="Pachebat J.A."/>
            <person name="Gloeckner G."/>
            <person name="Rajandream M.A."/>
            <person name="Sucgang R."/>
            <person name="Berriman M."/>
            <person name="Song J."/>
            <person name="Olsen R."/>
            <person name="Szafranski K."/>
            <person name="Xu Q."/>
            <person name="Tunggal B."/>
            <person name="Kummerfeld S."/>
            <person name="Madera M."/>
            <person name="Konfortov B.A."/>
            <person name="Rivero F."/>
            <person name="Bankier A.T."/>
            <person name="Lehmann R."/>
            <person name="Hamlin N."/>
            <person name="Davies R."/>
            <person name="Gaudet P."/>
            <person name="Fey P."/>
            <person name="Pilcher K."/>
            <person name="Chen G."/>
            <person name="Saunders D."/>
            <person name="Sodergren E.J."/>
            <person name="Davis P."/>
            <person name="Kerhornou A."/>
            <person name="Nie X."/>
            <person name="Hall N."/>
            <person name="Anjard C."/>
            <person name="Hemphill L."/>
            <person name="Bason N."/>
            <person name="Farbrother P."/>
            <person name="Desany B."/>
            <person name="Just E."/>
            <person name="Morio T."/>
            <person name="Rost R."/>
            <person name="Churcher C.M."/>
            <person name="Cooper J."/>
            <person name="Haydock S."/>
            <person name="van Driessche N."/>
            <person name="Cronin A."/>
            <person name="Goodhead I."/>
            <person name="Muzny D.M."/>
            <person name="Mourier T."/>
            <person name="Pain A."/>
            <person name="Lu M."/>
            <person name="Harper D."/>
            <person name="Lindsay R."/>
            <person name="Hauser H."/>
            <person name="James K.D."/>
            <person name="Quiles M."/>
            <person name="Madan Babu M."/>
            <person name="Saito T."/>
            <person name="Buchrieser C."/>
            <person name="Wardroper A."/>
            <person name="Felder M."/>
            <person name="Thangavelu M."/>
            <person name="Johnson D."/>
            <person name="Knights A."/>
            <person name="Loulseged H."/>
            <person name="Mungall K.L."/>
            <person name="Oliver K."/>
            <person name="Price C."/>
            <person name="Quail M.A."/>
            <person name="Urushihara H."/>
            <person name="Hernandez J."/>
            <person name="Rabbinowitsch E."/>
            <person name="Steffen D."/>
            <person name="Sanders M."/>
            <person name="Ma J."/>
            <person name="Kohara Y."/>
            <person name="Sharp S."/>
            <person name="Simmonds M.N."/>
            <person name="Spiegler S."/>
            <person name="Tivey A."/>
            <person name="Sugano S."/>
            <person name="White B."/>
            <person name="Walker D."/>
            <person name="Woodward J.R."/>
            <person name="Winckler T."/>
            <person name="Tanaka Y."/>
            <person name="Shaulsky G."/>
            <person name="Schleicher M."/>
            <person name="Weinstock G.M."/>
            <person name="Rosenthal A."/>
            <person name="Cox E.C."/>
            <person name="Chisholm R.L."/>
            <person name="Gibbs R.A."/>
            <person name="Loomis W.F."/>
            <person name="Platzer M."/>
            <person name="Kay R.R."/>
            <person name="Williams J.G."/>
            <person name="Dear P.H."/>
            <person name="Noegel A.A."/>
            <person name="Barrell B.G."/>
            <person name="Kuspa A."/>
        </authorList>
    </citation>
    <scope>NUCLEOTIDE SEQUENCE [LARGE SCALE GENOMIC DNA]</scope>
    <source>
        <strain>AX4</strain>
    </source>
</reference>
<comment type="function">
    <text evidence="1">Acts as a component of the translation initiation factor 2B (eIF2B) complex, which catalyzes the exchange of GDP for GTP on eukaryotic initiation factor 2 (eIF2) gamma subunit. Its guanine nucleotide exchange factor activity is repressed when bound to eIF2 complex phosphorylated on the alpha subunit, thereby limiting the amount of methionyl-initiator methionine tRNA available to the ribosome and consequently global translation is repressed.</text>
</comment>
<comment type="subunit">
    <text evidence="1">Component of the translation initiation factor 2B (eIF2B) complex which is a heterodecamer of two sets of five different subunits: alpha, beta, gamma, delta and epsilon. Subunits alpha, beta and delta comprise a regulatory subcomplex and subunits epsilon and gamma comprise a catalytic subcomplex. Within the complex, the hexameric regulatory complex resides at the center, with the two heterodimeric catalytic subcomplexes bound on opposite sides.</text>
</comment>
<comment type="subcellular location">
    <subcellularLocation>
        <location evidence="2">Cytoplasm</location>
        <location evidence="2">Cytosol</location>
    </subcellularLocation>
</comment>
<comment type="similarity">
    <text evidence="4">Belongs to the eIF-2B alpha/beta/delta subunits family.</text>
</comment>
<evidence type="ECO:0000250" key="1">
    <source>
        <dbReference type="UniProtKB" id="P49770"/>
    </source>
</evidence>
<evidence type="ECO:0000250" key="2">
    <source>
        <dbReference type="UniProtKB" id="Q9UT76"/>
    </source>
</evidence>
<evidence type="ECO:0000256" key="3">
    <source>
        <dbReference type="SAM" id="MobiDB-lite"/>
    </source>
</evidence>
<evidence type="ECO:0000305" key="4"/>
<gene>
    <name type="primary">eif2b2</name>
    <name type="ORF">DDB_G0291271</name>
</gene>
<protein>
    <recommendedName>
        <fullName>Translation initiation factor eIF2B subunit beta</fullName>
    </recommendedName>
    <alternativeName>
        <fullName>eIF2B GDP-GTP exchange factor subunit beta</fullName>
    </alternativeName>
</protein>
<sequence>MEKQAEKQLEKQLESFILHLKRKTVVGSYQVSRASAELLRQWVHKGKWGNAKSLIDQIKIIGKKLMNAQPLEFCIGNIVRRVLFIIREEYLTFFRNKKNGLNNDDYDDDDFETTTSNNNNNNNNNNINSSSNINKNNKYSNVMLQDDPIDDQEDIDFTETFPRLKAAIMDSINELIDELEGLHRNVAEQAIEHIHSNETIMTLGCSRTVEEFLKEAARKRSFKVIVVETAPSLEGQKTAISLSKASIDTTLITDSAVFAMMSRVNKVIIGTHAVMANGGLIATSGTHTLAVAAKYHSVPIVVCTGLYKLCPLYAYDQDTFNNFGSPGEYLKFEEAEFLENVHSYNPTFDYVAPDLVSLFITNIGGHNPSYIYRLLQEYYDARDILEDE</sequence>
<name>EI2BB_DICDI</name>
<proteinExistence type="inferred from homology"/>
<feature type="chain" id="PRO_0000328243" description="Translation initiation factor eIF2B subunit beta">
    <location>
        <begin position="1"/>
        <end position="388"/>
    </location>
</feature>
<feature type="region of interest" description="Disordered" evidence="3">
    <location>
        <begin position="109"/>
        <end position="133"/>
    </location>
</feature>
<feature type="compositionally biased region" description="Low complexity" evidence="3">
    <location>
        <begin position="116"/>
        <end position="133"/>
    </location>
</feature>